<reference key="1">
    <citation type="journal article" date="1992" name="J. Neurosci.">
        <title>Characterization of a novel synapse-specific protein. II. cDNA cloning and sequence analysis of the F1-20 protein.</title>
        <authorList>
            <person name="Zhou S."/>
            <person name="Sousa R."/>
            <person name="Tannery N.H."/>
            <person name="Lafer E.M."/>
        </authorList>
    </citation>
    <scope>NUCLEOTIDE SEQUENCE [MRNA] (ISOFORMS LONG AND SHORT)</scope>
</reference>
<reference key="2">
    <citation type="journal article" date="2004" name="Genome Res.">
        <title>The status, quality, and expansion of the NIH full-length cDNA project: the Mammalian Gene Collection (MGC).</title>
        <authorList>
            <consortium name="The MGC Project Team"/>
        </authorList>
    </citation>
    <scope>NUCLEOTIDE SEQUENCE [LARGE SCALE MRNA] (ISOFORM 3)</scope>
    <source>
        <tissue>Eye</tissue>
    </source>
</reference>
<reference key="3">
    <citation type="journal article" date="2004" name="Mol. Cell. Proteomics">
        <title>Phosphoproteomic analysis of the developing mouse brain.</title>
        <authorList>
            <person name="Ballif B.A."/>
            <person name="Villen J."/>
            <person name="Beausoleil S.A."/>
            <person name="Schwartz D."/>
            <person name="Gygi S.P."/>
        </authorList>
    </citation>
    <scope>IDENTIFICATION BY MASS SPECTROMETRY [LARGE SCALE ANALYSIS]</scope>
    <source>
        <tissue>Embryonic brain</tissue>
    </source>
</reference>
<reference key="4">
    <citation type="journal article" date="2010" name="Cell">
        <title>A tissue-specific atlas of mouse protein phosphorylation and expression.</title>
        <authorList>
            <person name="Huttlin E.L."/>
            <person name="Jedrychowski M.P."/>
            <person name="Elias J.E."/>
            <person name="Goswami T."/>
            <person name="Rad R."/>
            <person name="Beausoleil S.A."/>
            <person name="Villen J."/>
            <person name="Haas W."/>
            <person name="Sowa M.E."/>
            <person name="Gygi S.P."/>
        </authorList>
    </citation>
    <scope>PHOSPHORYLATION [LARGE SCALE ANALYSIS] AT SER-313 AND THR-317</scope>
    <scope>IDENTIFICATION BY MASS SPECTROMETRY [LARGE SCALE ANALYSIS]</scope>
    <source>
        <tissue>Brain</tissue>
        <tissue>Brown adipose tissue</tissue>
        <tissue>Heart</tissue>
    </source>
</reference>
<reference key="5">
    <citation type="journal article" date="2014" name="Mol. Cell. Proteomics">
        <title>Immunoaffinity enrichment and mass spectrometry analysis of protein methylation.</title>
        <authorList>
            <person name="Guo A."/>
            <person name="Gu H."/>
            <person name="Zhou J."/>
            <person name="Mulhern D."/>
            <person name="Wang Y."/>
            <person name="Lee K.A."/>
            <person name="Yang V."/>
            <person name="Aguiar M."/>
            <person name="Kornhauser J."/>
            <person name="Jia X."/>
            <person name="Ren J."/>
            <person name="Beausoleil S.A."/>
            <person name="Silva J.C."/>
            <person name="Vemulapalli V."/>
            <person name="Bedford M.T."/>
            <person name="Comb M.J."/>
        </authorList>
    </citation>
    <scope>METHYLATION [LARGE SCALE ANALYSIS] AT ARG-859</scope>
    <scope>IDENTIFICATION BY MASS SPECTROMETRY [LARGE SCALE ANALYSIS]</scope>
    <source>
        <tissue>Brain</tissue>
        <tissue>Embryo</tissue>
    </source>
</reference>
<name>AP180_MOUSE</name>
<protein>
    <recommendedName>
        <fullName>Clathrin coat assembly protein AP180</fullName>
    </recommendedName>
    <alternativeName>
        <fullName>91 kDa synaptosomal-associated protein</fullName>
    </alternativeName>
    <alternativeName>
        <fullName>Clathrin coat-associated protein AP180</fullName>
    </alternativeName>
    <alternativeName>
        <fullName>Phosphoprotein F1-20</fullName>
    </alternativeName>
</protein>
<proteinExistence type="evidence at protein level"/>
<keyword id="KW-0025">Alternative splicing</keyword>
<keyword id="KW-1003">Cell membrane</keyword>
<keyword id="KW-0168">Coated pit</keyword>
<keyword id="KW-0325">Glycoprotein</keyword>
<keyword id="KW-0472">Membrane</keyword>
<keyword id="KW-0488">Methylation</keyword>
<keyword id="KW-0597">Phosphoprotein</keyword>
<keyword id="KW-0653">Protein transport</keyword>
<keyword id="KW-1185">Reference proteome</keyword>
<keyword id="KW-0813">Transport</keyword>
<dbReference type="EMBL" id="M83985">
    <property type="protein sequence ID" value="AAA37587.1"/>
    <property type="molecule type" value="mRNA"/>
</dbReference>
<dbReference type="EMBL" id="M83985">
    <property type="protein sequence ID" value="AAA37586.1"/>
    <property type="molecule type" value="mRNA"/>
</dbReference>
<dbReference type="EMBL" id="BC031773">
    <property type="protein sequence ID" value="AAH31773.1"/>
    <property type="molecule type" value="mRNA"/>
</dbReference>
<dbReference type="PIR" id="A44825">
    <property type="entry name" value="A44825"/>
</dbReference>
<dbReference type="RefSeq" id="NP_001264911.1">
    <molecule id="Q61548-3"/>
    <property type="nucleotide sequence ID" value="NM_001277982.2"/>
</dbReference>
<dbReference type="RefSeq" id="NP_001264915.1">
    <molecule id="Q61548-2"/>
    <property type="nucleotide sequence ID" value="NM_001277986.1"/>
</dbReference>
<dbReference type="RefSeq" id="NP_001344699.1">
    <molecule id="Q61548-1"/>
    <property type="nucleotide sequence ID" value="NM_001357770.1"/>
</dbReference>
<dbReference type="RefSeq" id="NP_038697.1">
    <molecule id="Q61548-1"/>
    <property type="nucleotide sequence ID" value="NM_013669.2"/>
</dbReference>
<dbReference type="RefSeq" id="XP_006510957.1">
    <property type="nucleotide sequence ID" value="XM_006510894.3"/>
</dbReference>
<dbReference type="RefSeq" id="XP_006510963.1">
    <molecule id="Q61548-3"/>
    <property type="nucleotide sequence ID" value="XM_006510900.4"/>
</dbReference>
<dbReference type="BMRB" id="Q61548"/>
<dbReference type="EMDB" id="EMD-3442"/>
<dbReference type="EMDB" id="EMD-4035"/>
<dbReference type="EMDB" id="EMD-4036"/>
<dbReference type="SMR" id="Q61548"/>
<dbReference type="BioGRID" id="203364">
    <property type="interactions" value="25"/>
</dbReference>
<dbReference type="ELM" id="Q61548"/>
<dbReference type="FunCoup" id="Q61548">
    <property type="interactions" value="769"/>
</dbReference>
<dbReference type="IntAct" id="Q61548">
    <property type="interactions" value="6"/>
</dbReference>
<dbReference type="MINT" id="Q61548"/>
<dbReference type="STRING" id="10090.ENSMUSP00000096096"/>
<dbReference type="GlyCosmos" id="Q61548">
    <property type="glycosylation" value="1 site, No reported glycans"/>
</dbReference>
<dbReference type="GlyGen" id="Q61548">
    <property type="glycosylation" value="12 sites, 1 N-linked glycan (1 site), 1 O-linked glycan (5 sites)"/>
</dbReference>
<dbReference type="iPTMnet" id="Q61548"/>
<dbReference type="MetOSite" id="Q61548"/>
<dbReference type="PhosphoSitePlus" id="Q61548"/>
<dbReference type="SwissPalm" id="Q61548"/>
<dbReference type="CPTAC" id="non-CPTAC-3444"/>
<dbReference type="jPOST" id="Q61548"/>
<dbReference type="PaxDb" id="10090-ENSMUSP00000096096"/>
<dbReference type="PeptideAtlas" id="Q61548"/>
<dbReference type="ProteomicsDB" id="296050">
    <molecule id="Q61548-1"/>
</dbReference>
<dbReference type="ProteomicsDB" id="296051">
    <molecule id="Q61548-2"/>
</dbReference>
<dbReference type="ProteomicsDB" id="296052">
    <molecule id="Q61548-3"/>
</dbReference>
<dbReference type="DNASU" id="20616"/>
<dbReference type="GeneID" id="20616"/>
<dbReference type="KEGG" id="mmu:20616"/>
<dbReference type="UCSC" id="uc029xff.2">
    <molecule id="Q61548-3"/>
    <property type="organism name" value="mouse"/>
</dbReference>
<dbReference type="UCSC" id="uc033jlv.1">
    <molecule id="Q61548-2"/>
    <property type="organism name" value="mouse"/>
</dbReference>
<dbReference type="UCSC" id="uc033jlw.1">
    <molecule id="Q61548-1"/>
    <property type="organism name" value="mouse"/>
</dbReference>
<dbReference type="AGR" id="MGI:109132"/>
<dbReference type="CTD" id="9892"/>
<dbReference type="MGI" id="MGI:109132">
    <property type="gene designation" value="Snap91"/>
</dbReference>
<dbReference type="eggNOG" id="KOG0251">
    <property type="taxonomic scope" value="Eukaryota"/>
</dbReference>
<dbReference type="InParanoid" id="Q61548"/>
<dbReference type="PhylomeDB" id="Q61548"/>
<dbReference type="Reactome" id="R-MMU-8856825">
    <property type="pathway name" value="Cargo recognition for clathrin-mediated endocytosis"/>
</dbReference>
<dbReference type="Reactome" id="R-MMU-8856828">
    <property type="pathway name" value="Clathrin-mediated endocytosis"/>
</dbReference>
<dbReference type="BioGRID-ORCS" id="20616">
    <property type="hits" value="3 hits in 73 CRISPR screens"/>
</dbReference>
<dbReference type="CD-CODE" id="CE726F99">
    <property type="entry name" value="Postsynaptic density"/>
</dbReference>
<dbReference type="ChiTaRS" id="Snap91">
    <property type="organism name" value="mouse"/>
</dbReference>
<dbReference type="PRO" id="PR:Q61548"/>
<dbReference type="Proteomes" id="UP000000589">
    <property type="component" value="Unplaced"/>
</dbReference>
<dbReference type="RNAct" id="Q61548">
    <property type="molecule type" value="protein"/>
</dbReference>
<dbReference type="GO" id="GO:0030122">
    <property type="term" value="C:AP-2 adaptor complex"/>
    <property type="evidence" value="ECO:0000305"/>
    <property type="project" value="BHF-UCL"/>
</dbReference>
<dbReference type="GO" id="GO:0098793">
    <property type="term" value="C:presynapse"/>
    <property type="evidence" value="ECO:0007669"/>
    <property type="project" value="GOC"/>
</dbReference>
<dbReference type="GO" id="GO:0005545">
    <property type="term" value="F:1-phosphatidylinositol binding"/>
    <property type="evidence" value="ECO:0000314"/>
    <property type="project" value="BHF-UCL"/>
</dbReference>
<dbReference type="GO" id="GO:0032050">
    <property type="term" value="F:clathrin heavy chain binding"/>
    <property type="evidence" value="ECO:0000353"/>
    <property type="project" value="BHF-UCL"/>
</dbReference>
<dbReference type="GO" id="GO:0060090">
    <property type="term" value="F:molecular adaptor activity"/>
    <property type="evidence" value="ECO:0000269"/>
    <property type="project" value="DisProt"/>
</dbReference>
<dbReference type="GO" id="GO:0019901">
    <property type="term" value="F:protein kinase binding"/>
    <property type="evidence" value="ECO:0000353"/>
    <property type="project" value="ParkinsonsUK-UCL"/>
</dbReference>
<dbReference type="GO" id="GO:0007268">
    <property type="term" value="P:chemical synaptic transmission"/>
    <property type="evidence" value="ECO:0000315"/>
    <property type="project" value="BHF-UCL"/>
</dbReference>
<dbReference type="GO" id="GO:0048268">
    <property type="term" value="P:clathrin coat assembly"/>
    <property type="evidence" value="ECO:0000314"/>
    <property type="project" value="BHF-UCL"/>
</dbReference>
<dbReference type="GO" id="GO:0072583">
    <property type="term" value="P:clathrin-dependent endocytosis"/>
    <property type="evidence" value="ECO:0007669"/>
    <property type="project" value="InterPro"/>
</dbReference>
<dbReference type="GO" id="GO:0007269">
    <property type="term" value="P:neurotransmitter secretion"/>
    <property type="evidence" value="ECO:0000315"/>
    <property type="project" value="BHF-UCL"/>
</dbReference>
<dbReference type="GO" id="GO:0015031">
    <property type="term" value="P:protein transport"/>
    <property type="evidence" value="ECO:0007669"/>
    <property type="project" value="UniProtKB-KW"/>
</dbReference>
<dbReference type="GO" id="GO:2000369">
    <property type="term" value="P:regulation of clathrin-dependent endocytosis"/>
    <property type="evidence" value="ECO:0000266"/>
    <property type="project" value="MGI"/>
</dbReference>
<dbReference type="CDD" id="cd16985">
    <property type="entry name" value="ANTH_N_AP180"/>
    <property type="match status" value="1"/>
</dbReference>
<dbReference type="DisProt" id="DP01073"/>
<dbReference type="FunFam" id="1.20.58.150:FF:000002">
    <property type="entry name" value="clathrin coat assembly protein AP180"/>
    <property type="match status" value="1"/>
</dbReference>
<dbReference type="FunFam" id="1.25.40.90:FF:000001">
    <property type="entry name" value="phosphatidylinositol-binding clathrin assembly protein-like isoform X1"/>
    <property type="match status" value="1"/>
</dbReference>
<dbReference type="Gene3D" id="1.25.40.90">
    <property type="match status" value="1"/>
</dbReference>
<dbReference type="Gene3D" id="1.20.58.150">
    <property type="entry name" value="ANTH domain"/>
    <property type="match status" value="1"/>
</dbReference>
<dbReference type="InterPro" id="IPR011417">
    <property type="entry name" value="ANTH_dom"/>
</dbReference>
<dbReference type="InterPro" id="IPR014712">
    <property type="entry name" value="ANTH_dom_sf"/>
</dbReference>
<dbReference type="InterPro" id="IPR045192">
    <property type="entry name" value="AP180-like"/>
</dbReference>
<dbReference type="InterPro" id="IPR013809">
    <property type="entry name" value="ENTH"/>
</dbReference>
<dbReference type="InterPro" id="IPR008942">
    <property type="entry name" value="ENTH_VHS"/>
</dbReference>
<dbReference type="PANTHER" id="PTHR22951">
    <property type="entry name" value="CLATHRIN ASSEMBLY PROTEIN"/>
    <property type="match status" value="1"/>
</dbReference>
<dbReference type="PANTHER" id="PTHR22951:SF4">
    <property type="entry name" value="CLATHRIN COAT ASSEMBLY PROTEIN AP180"/>
    <property type="match status" value="1"/>
</dbReference>
<dbReference type="Pfam" id="PF07651">
    <property type="entry name" value="ANTH"/>
    <property type="match status" value="1"/>
</dbReference>
<dbReference type="SMART" id="SM00273">
    <property type="entry name" value="ENTH"/>
    <property type="match status" value="1"/>
</dbReference>
<dbReference type="SUPFAM" id="SSF48464">
    <property type="entry name" value="ENTH/VHS domain"/>
    <property type="match status" value="1"/>
</dbReference>
<dbReference type="SUPFAM" id="SSF89009">
    <property type="entry name" value="GAT-like domain"/>
    <property type="match status" value="1"/>
</dbReference>
<dbReference type="PROSITE" id="PS50942">
    <property type="entry name" value="ENTH"/>
    <property type="match status" value="1"/>
</dbReference>
<gene>
    <name type="primary">Snap91</name>
</gene>
<evidence type="ECO:0000250" key="1"/>
<evidence type="ECO:0000250" key="2">
    <source>
        <dbReference type="UniProtKB" id="Q05140"/>
    </source>
</evidence>
<evidence type="ECO:0000255" key="3">
    <source>
        <dbReference type="PROSITE-ProRule" id="PRU00243"/>
    </source>
</evidence>
<evidence type="ECO:0000256" key="4">
    <source>
        <dbReference type="SAM" id="MobiDB-lite"/>
    </source>
</evidence>
<evidence type="ECO:0000303" key="5">
    <source>
    </source>
</evidence>
<evidence type="ECO:0000303" key="6">
    <source>
    </source>
</evidence>
<evidence type="ECO:0000305" key="7"/>
<evidence type="ECO:0007744" key="8">
    <source>
    </source>
</evidence>
<evidence type="ECO:0007744" key="9">
    <source>
    </source>
</evidence>
<feature type="chain" id="PRO_0000193865" description="Clathrin coat assembly protein AP180">
    <location>
        <begin position="1"/>
        <end position="901"/>
    </location>
</feature>
<feature type="domain" description="ENTH" evidence="3">
    <location>
        <begin position="14"/>
        <end position="145"/>
    </location>
</feature>
<feature type="region of interest" description="Disordered" evidence="4">
    <location>
        <begin position="285"/>
        <end position="326"/>
    </location>
</feature>
<feature type="region of interest" description="Disordered" evidence="4">
    <location>
        <begin position="397"/>
        <end position="424"/>
    </location>
</feature>
<feature type="region of interest" description="Disordered" evidence="4">
    <location>
        <begin position="497"/>
        <end position="522"/>
    </location>
</feature>
<feature type="region of interest" description="Disordered" evidence="4">
    <location>
        <begin position="573"/>
        <end position="606"/>
    </location>
</feature>
<feature type="region of interest" description="Disordered" evidence="4">
    <location>
        <begin position="803"/>
        <end position="845"/>
    </location>
</feature>
<feature type="region of interest" description="Disordered" evidence="4">
    <location>
        <begin position="857"/>
        <end position="901"/>
    </location>
</feature>
<feature type="compositionally biased region" description="Polar residues" evidence="4">
    <location>
        <begin position="302"/>
        <end position="324"/>
    </location>
</feature>
<feature type="compositionally biased region" description="Low complexity" evidence="4">
    <location>
        <begin position="410"/>
        <end position="424"/>
    </location>
</feature>
<feature type="compositionally biased region" description="Low complexity" evidence="4">
    <location>
        <begin position="500"/>
        <end position="511"/>
    </location>
</feature>
<feature type="compositionally biased region" description="Pro residues" evidence="4">
    <location>
        <begin position="512"/>
        <end position="522"/>
    </location>
</feature>
<feature type="compositionally biased region" description="Low complexity" evidence="4">
    <location>
        <begin position="835"/>
        <end position="845"/>
    </location>
</feature>
<feature type="compositionally biased region" description="Polar residues" evidence="4">
    <location>
        <begin position="870"/>
        <end position="882"/>
    </location>
</feature>
<feature type="compositionally biased region" description="Basic and acidic residues" evidence="4">
    <location>
        <begin position="887"/>
        <end position="901"/>
    </location>
</feature>
<feature type="modified residue" description="Phosphoserine" evidence="2">
    <location>
        <position position="296"/>
    </location>
</feature>
<feature type="modified residue" description="Phosphoserine" evidence="2">
    <location>
        <position position="300"/>
    </location>
</feature>
<feature type="modified residue" description="Phosphoserine" evidence="2">
    <location>
        <position position="306"/>
    </location>
</feature>
<feature type="modified residue" description="Phosphoserine" evidence="8">
    <location>
        <position position="313"/>
    </location>
</feature>
<feature type="modified residue" description="Phosphothreonine" evidence="8">
    <location>
        <position position="317"/>
    </location>
</feature>
<feature type="modified residue" description="Phosphoserine" evidence="2">
    <location>
        <position position="594"/>
    </location>
</feature>
<feature type="modified residue" description="Phosphoserine" evidence="2">
    <location>
        <position position="600"/>
    </location>
</feature>
<feature type="modified residue" description="Phosphoserine" evidence="2">
    <location>
        <position position="621"/>
    </location>
</feature>
<feature type="modified residue" description="Phosphoserine" evidence="2">
    <location>
        <position position="627"/>
    </location>
</feature>
<feature type="modified residue" description="Phosphoserine" evidence="2">
    <location>
        <position position="761"/>
    </location>
</feature>
<feature type="modified residue" description="Asymmetric dimethylarginine; alternate" evidence="9">
    <location>
        <position position="859"/>
    </location>
</feature>
<feature type="modified residue" description="Omega-N-methylarginine; alternate" evidence="9">
    <location>
        <position position="859"/>
    </location>
</feature>
<feature type="glycosylation site" description="O-linked (GlcNAc) threonine" evidence="1">
    <location>
        <position position="310"/>
    </location>
</feature>
<feature type="splice variant" id="VSP_000172" description="In isoform Short and isoform 3." evidence="5 6">
    <location>
        <begin position="715"/>
        <end position="719"/>
    </location>
</feature>
<feature type="splice variant" id="VSP_022635" description="In isoform 3." evidence="5">
    <location>
        <begin position="809"/>
        <end position="836"/>
    </location>
</feature>
<comment type="function">
    <text>Adaptins are components of the adaptor complexes which link clathrin to receptors in coated vesicles. Clathrin-associated protein complexes are believed to interact with the cytoplasmic tails of membrane proteins, leading to their selection and concentration. Binding of AP180 to clathrin triskelia induces their assembly into 60-70 nm coats.</text>
</comment>
<comment type="subunit">
    <text evidence="1">Binds AP2A2. Interacts with AP2B1; clathrin competes with SNAP91 (By similarity).</text>
</comment>
<comment type="subcellular location">
    <subcellularLocation>
        <location>Cell membrane</location>
    </subcellularLocation>
    <subcellularLocation>
        <location>Membrane</location>
        <location>Coated pit</location>
        <topology>Peripheral membrane protein</topology>
        <orientation>Cytoplasmic side</orientation>
    </subcellularLocation>
    <text>Component of the coat surrounding the cytoplasmic face of coated vesicles in the plasma membrane.</text>
</comment>
<comment type="alternative products">
    <event type="alternative splicing"/>
    <isoform>
        <id>Q61548-1</id>
        <name>Long</name>
        <sequence type="displayed"/>
    </isoform>
    <isoform>
        <id>Q61548-2</id>
        <name>Short</name>
        <sequence type="described" ref="VSP_000172"/>
    </isoform>
    <isoform>
        <id>Q61548-3</id>
        <name>3</name>
        <sequence type="described" ref="VSP_000172 VSP_022635"/>
    </isoform>
</comment>
<comment type="tissue specificity">
    <text>Brain. Associated with the synapses.</text>
</comment>
<comment type="developmental stage">
    <text>Developmentally regulated in a pattern coincident with active synaptogenesis and synaptic maturation.</text>
</comment>
<comment type="domain">
    <text>Possesses a three domain structure: the N-terminal 300 residues harbor a clathrin binding site, an acidic middle domain 450 residues, interrupted by an Ala-rich segment, and the C-terminal domain (166 residues).</text>
</comment>
<comment type="PTM">
    <text evidence="1">Thr-310 can be modified by the addition of N-acetylglucosamine which can be further phosphorylated. There is no evidence for direct Thr-310 phosphorylation (By similarity).</text>
</comment>
<comment type="similarity">
    <text evidence="7">Belongs to the PICALM/SNAP91 family.</text>
</comment>
<accession>Q61548</accession>
<accession>Q61547</accession>
<accession>Q8K0D4</accession>
<organism>
    <name type="scientific">Mus musculus</name>
    <name type="common">Mouse</name>
    <dbReference type="NCBI Taxonomy" id="10090"/>
    <lineage>
        <taxon>Eukaryota</taxon>
        <taxon>Metazoa</taxon>
        <taxon>Chordata</taxon>
        <taxon>Craniata</taxon>
        <taxon>Vertebrata</taxon>
        <taxon>Euteleostomi</taxon>
        <taxon>Mammalia</taxon>
        <taxon>Eutheria</taxon>
        <taxon>Euarchontoglires</taxon>
        <taxon>Glires</taxon>
        <taxon>Rodentia</taxon>
        <taxon>Myomorpha</taxon>
        <taxon>Muroidea</taxon>
        <taxon>Muridae</taxon>
        <taxon>Murinae</taxon>
        <taxon>Mus</taxon>
        <taxon>Mus</taxon>
    </lineage>
</organism>
<sequence length="901" mass="91851">MSGQTLTDRIAAAQYSVTGSAVARAVCKATTHEVMGPKKKHLDYLIQATNETNVNIPQMADTLFERATNSSWVVVFKALVTTHHLMVHGNERFIQYLASRNTLFNLSNFLDKSGSHGYDMSTFIRRYSRYLNEKAFSYRQMAFDFARVKKGADGVMRTMVPEKLLKSMPILQGQIDALLEFDVHPNELTNGVINAAFMLLFKDLIKLFACYNDGVINLLEKFFEMKKGQCKDALEIYKRFLTRMTRVSEFLKVAEQVGIDKGDIPDLTQAPSSLMETLEQHLNTLEGKKPGNNEGSGAPSPLSKSSPATTVTSPNSTPAKTIDTSPPVDIFATASAAAPVSSAKPSSDLLDLQPDFSGAAAGAAAPVVPPSGGATAWGDLLGEDSLAALSSVPCEAPISDPFAPEPSPPTTTTEPASASASTTTAVTAVTTEVDLFGDAFAASPGEAPAASEGATAPATPAPVAAALDACSGNDPFAPSEGSAEAAPELDLFAMKPPETSAPVVTPTASTAPPVPATAPSPAPTAVAATAATTTAAAAATTTATTSAAAATTAAAPPALDIFGDLFDSAPEVAAAPKPDAAPSIDLFGTDAFSSPPRGASPVPESSLTADLLSVDAFAAPSPASTASPAKAESSGVIDLFGDAFGSGASETQPAPQAVSSSSASADLLAGFGGSFMAPSTTPVTPAQNNLLQPSFEAAFGTTPSTSSSSSFDPSVFDGLGDLLMPTMAPSGQPAPVSMVPPSPAMAASKGLGSDLDSSLASLVGNLGISGTTSKKGDLQWNAGEKKLTGGANWQPKVTPATWSAGVPPQGTVPPTSSVPPGAGAPSVGQPGAGFGMPPSGTGMTMMSQQPVMFAQPMMRPPFGAAAVPGTQLSPSPTPATQSPKKPPAKDPLADLNIKDFL</sequence>